<protein>
    <recommendedName>
        <fullName evidence="1">UPF0319 protein HS_1349</fullName>
    </recommendedName>
</protein>
<feature type="signal peptide" evidence="1">
    <location>
        <begin position="1"/>
        <end position="21"/>
    </location>
</feature>
<feature type="chain" id="PRO_1000046904" description="UPF0319 protein HS_1349">
    <location>
        <begin position="22"/>
        <end position="217"/>
    </location>
</feature>
<sequence>MKFSFAALASAMLLTSTAAFAGIVTSSSNIDFLAIDGQKANKDLLKSTKSFNINESQTHQVVVRVSEIVRHGSDRSLYESDPIVVTFQGTNEDVVISAPKLENERDIKNFKDSPSVIVKTNSGRIIATKQEILKQEGFLPGANLIDTLSEYNASGSVASVSSFATAMPAVALGFTKAQKGKVVVQGENIAEQQLQFWFQQADKETQVRFLNWAKNQK</sequence>
<dbReference type="EMBL" id="CP000436">
    <property type="protein sequence ID" value="ABI25624.1"/>
    <property type="molecule type" value="Genomic_DNA"/>
</dbReference>
<dbReference type="KEGG" id="hso:HS_1349"/>
<dbReference type="eggNOG" id="COG3110">
    <property type="taxonomic scope" value="Bacteria"/>
</dbReference>
<dbReference type="HOGENOM" id="CLU_073782_2_0_6"/>
<dbReference type="HAMAP" id="MF_00789">
    <property type="entry name" value="UPF0319"/>
    <property type="match status" value="1"/>
</dbReference>
<dbReference type="InterPro" id="IPR018635">
    <property type="entry name" value="UPF0319"/>
</dbReference>
<dbReference type="NCBIfam" id="NF002516">
    <property type="entry name" value="PRK01904.1"/>
    <property type="match status" value="1"/>
</dbReference>
<dbReference type="PANTHER" id="PTHR38108">
    <property type="entry name" value="UPF0319 PROTEIN YCCT"/>
    <property type="match status" value="1"/>
</dbReference>
<dbReference type="PANTHER" id="PTHR38108:SF1">
    <property type="entry name" value="UPF0319 PROTEIN YCCT"/>
    <property type="match status" value="1"/>
</dbReference>
<dbReference type="Pfam" id="PF09829">
    <property type="entry name" value="DUF2057"/>
    <property type="match status" value="1"/>
</dbReference>
<evidence type="ECO:0000255" key="1">
    <source>
        <dbReference type="HAMAP-Rule" id="MF_00789"/>
    </source>
</evidence>
<name>Y1349_HISS1</name>
<gene>
    <name type="ordered locus">HS_1349</name>
</gene>
<reference key="1">
    <citation type="journal article" date="2007" name="J. Bacteriol.">
        <title>Complete genome sequence of Haemophilus somnus (Histophilus somni) strain 129Pt and comparison to Haemophilus ducreyi 35000HP and Haemophilus influenzae Rd.</title>
        <authorList>
            <person name="Challacombe J.F."/>
            <person name="Duncan A.J."/>
            <person name="Brettin T.S."/>
            <person name="Bruce D."/>
            <person name="Chertkov O."/>
            <person name="Detter J.C."/>
            <person name="Han C.S."/>
            <person name="Misra M."/>
            <person name="Richardson P."/>
            <person name="Tapia R."/>
            <person name="Thayer N."/>
            <person name="Xie G."/>
            <person name="Inzana T.J."/>
        </authorList>
    </citation>
    <scope>NUCLEOTIDE SEQUENCE [LARGE SCALE GENOMIC DNA]</scope>
    <source>
        <strain>129Pt</strain>
    </source>
</reference>
<organism>
    <name type="scientific">Histophilus somni (strain 129Pt)</name>
    <name type="common">Haemophilus somnus</name>
    <dbReference type="NCBI Taxonomy" id="205914"/>
    <lineage>
        <taxon>Bacteria</taxon>
        <taxon>Pseudomonadati</taxon>
        <taxon>Pseudomonadota</taxon>
        <taxon>Gammaproteobacteria</taxon>
        <taxon>Pasteurellales</taxon>
        <taxon>Pasteurellaceae</taxon>
        <taxon>Histophilus</taxon>
    </lineage>
</organism>
<comment type="similarity">
    <text evidence="1">Belongs to the UPF0319 family.</text>
</comment>
<proteinExistence type="inferred from homology"/>
<keyword id="KW-0732">Signal</keyword>
<accession>Q0I4N4</accession>